<gene>
    <name evidence="1" type="primary">rpmF</name>
    <name type="ordered locus">OCAR_4114</name>
    <name type="ordered locus">OCA5_c03970</name>
</gene>
<proteinExistence type="inferred from homology"/>
<feature type="chain" id="PRO_1000120151" description="Large ribosomal subunit protein bL32">
    <location>
        <begin position="1"/>
        <end position="61"/>
    </location>
</feature>
<feature type="region of interest" description="Disordered" evidence="2">
    <location>
        <begin position="1"/>
        <end position="61"/>
    </location>
</feature>
<feature type="compositionally biased region" description="Basic residues" evidence="2">
    <location>
        <begin position="1"/>
        <end position="16"/>
    </location>
</feature>
<feature type="compositionally biased region" description="Basic and acidic residues" evidence="2">
    <location>
        <begin position="17"/>
        <end position="44"/>
    </location>
</feature>
<reference key="1">
    <citation type="journal article" date="2008" name="J. Bacteriol.">
        <title>Genome sequence of the chemolithoautotrophic bacterium Oligotropha carboxidovorans OM5T.</title>
        <authorList>
            <person name="Paul D."/>
            <person name="Bridges S."/>
            <person name="Burgess S.C."/>
            <person name="Dandass Y."/>
            <person name="Lawrence M.L."/>
        </authorList>
    </citation>
    <scope>NUCLEOTIDE SEQUENCE [LARGE SCALE GENOMIC DNA]</scope>
    <source>
        <strain>ATCC 49405 / DSM 1227 / KCTC 32145 / OM5</strain>
    </source>
</reference>
<reference key="2">
    <citation type="journal article" date="2011" name="J. Bacteriol.">
        <title>Complete genome sequences of the chemolithoautotrophic Oligotropha carboxidovorans strains OM4 and OM5.</title>
        <authorList>
            <person name="Volland S."/>
            <person name="Rachinger M."/>
            <person name="Strittmatter A."/>
            <person name="Daniel R."/>
            <person name="Gottschalk G."/>
            <person name="Meyer O."/>
        </authorList>
    </citation>
    <scope>NUCLEOTIDE SEQUENCE [LARGE SCALE GENOMIC DNA]</scope>
    <source>
        <strain>ATCC 49405 / DSM 1227 / KCTC 32145 / OM5</strain>
    </source>
</reference>
<sequence length="61" mass="7106">MAVPRRKTSPSRRGMRRSADALKKPTYVEDKDSGELRRPHHLDLKTGMYKGRQVLKVKKED</sequence>
<evidence type="ECO:0000255" key="1">
    <source>
        <dbReference type="HAMAP-Rule" id="MF_00340"/>
    </source>
</evidence>
<evidence type="ECO:0000256" key="2">
    <source>
        <dbReference type="SAM" id="MobiDB-lite"/>
    </source>
</evidence>
<evidence type="ECO:0000305" key="3"/>
<accession>B6JA22</accession>
<accession>F8BUR9</accession>
<dbReference type="EMBL" id="CP001196">
    <property type="protein sequence ID" value="ACI91265.1"/>
    <property type="molecule type" value="Genomic_DNA"/>
</dbReference>
<dbReference type="EMBL" id="CP002826">
    <property type="protein sequence ID" value="AEI05122.1"/>
    <property type="molecule type" value="Genomic_DNA"/>
</dbReference>
<dbReference type="RefSeq" id="WP_002718196.1">
    <property type="nucleotide sequence ID" value="NC_015684.1"/>
</dbReference>
<dbReference type="SMR" id="B6JA22"/>
<dbReference type="STRING" id="504832.OCA5_c03970"/>
<dbReference type="KEGG" id="oca:OCAR_4114"/>
<dbReference type="KEGG" id="ocg:OCA5_c03970"/>
<dbReference type="PATRIC" id="fig|504832.7.peg.417"/>
<dbReference type="eggNOG" id="COG0333">
    <property type="taxonomic scope" value="Bacteria"/>
</dbReference>
<dbReference type="HOGENOM" id="CLU_129084_2_2_5"/>
<dbReference type="OrthoDB" id="9801927at2"/>
<dbReference type="Proteomes" id="UP000007730">
    <property type="component" value="Chromosome"/>
</dbReference>
<dbReference type="GO" id="GO:0015934">
    <property type="term" value="C:large ribosomal subunit"/>
    <property type="evidence" value="ECO:0007669"/>
    <property type="project" value="InterPro"/>
</dbReference>
<dbReference type="GO" id="GO:0003735">
    <property type="term" value="F:structural constituent of ribosome"/>
    <property type="evidence" value="ECO:0007669"/>
    <property type="project" value="InterPro"/>
</dbReference>
<dbReference type="GO" id="GO:0006412">
    <property type="term" value="P:translation"/>
    <property type="evidence" value="ECO:0007669"/>
    <property type="project" value="UniProtKB-UniRule"/>
</dbReference>
<dbReference type="Gene3D" id="1.20.5.640">
    <property type="entry name" value="Single helix bin"/>
    <property type="match status" value="1"/>
</dbReference>
<dbReference type="HAMAP" id="MF_00340">
    <property type="entry name" value="Ribosomal_bL32"/>
    <property type="match status" value="1"/>
</dbReference>
<dbReference type="InterPro" id="IPR002677">
    <property type="entry name" value="Ribosomal_bL32"/>
</dbReference>
<dbReference type="InterPro" id="IPR044957">
    <property type="entry name" value="Ribosomal_bL32_bact"/>
</dbReference>
<dbReference type="InterPro" id="IPR011332">
    <property type="entry name" value="Ribosomal_zn-bd"/>
</dbReference>
<dbReference type="NCBIfam" id="TIGR01031">
    <property type="entry name" value="rpmF_bact"/>
    <property type="match status" value="1"/>
</dbReference>
<dbReference type="PANTHER" id="PTHR35534">
    <property type="entry name" value="50S RIBOSOMAL PROTEIN L32"/>
    <property type="match status" value="1"/>
</dbReference>
<dbReference type="PANTHER" id="PTHR35534:SF1">
    <property type="entry name" value="LARGE RIBOSOMAL SUBUNIT PROTEIN BL32"/>
    <property type="match status" value="1"/>
</dbReference>
<dbReference type="Pfam" id="PF01783">
    <property type="entry name" value="Ribosomal_L32p"/>
    <property type="match status" value="1"/>
</dbReference>
<dbReference type="SUPFAM" id="SSF57829">
    <property type="entry name" value="Zn-binding ribosomal proteins"/>
    <property type="match status" value="1"/>
</dbReference>
<protein>
    <recommendedName>
        <fullName evidence="1">Large ribosomal subunit protein bL32</fullName>
    </recommendedName>
    <alternativeName>
        <fullName evidence="3">50S ribosomal protein L32</fullName>
    </alternativeName>
</protein>
<organism>
    <name type="scientific">Afipia carboxidovorans (strain ATCC 49405 / DSM 1227 / KCTC 32145 / OM5)</name>
    <name type="common">Oligotropha carboxidovorans</name>
    <dbReference type="NCBI Taxonomy" id="504832"/>
    <lineage>
        <taxon>Bacteria</taxon>
        <taxon>Pseudomonadati</taxon>
        <taxon>Pseudomonadota</taxon>
        <taxon>Alphaproteobacteria</taxon>
        <taxon>Hyphomicrobiales</taxon>
        <taxon>Nitrobacteraceae</taxon>
        <taxon>Afipia</taxon>
    </lineage>
</organism>
<keyword id="KW-1185">Reference proteome</keyword>
<keyword id="KW-0687">Ribonucleoprotein</keyword>
<keyword id="KW-0689">Ribosomal protein</keyword>
<name>RL32_AFIC5</name>
<comment type="similarity">
    <text evidence="1">Belongs to the bacterial ribosomal protein bL32 family.</text>
</comment>